<accession>P07331</accession>
<gene>
    <name type="primary">V-MOS</name>
</gene>
<organismHost>
    <name type="scientific">Mus musculus</name>
    <name type="common">Mouse</name>
    <dbReference type="NCBI Taxonomy" id="10090"/>
</organismHost>
<proteinExistence type="evidence at transcript level"/>
<sequence length="374" mass="41094">MARSTPCSQTSLAVPTHFSLVSHVTVPSEGVMPSPLSLCRYLPRELSPSVDSRSCSIPLVAPRKAGKLFLGTTPPRAPGLPRRLAWFSIDWEQVCLMHRLGSGGFGSVYKATYHGVPVAIKQVNKCTKDLRASQRSFWAELNIARLRHDNIVRVVAASTRTPEDSNSLGTIIMEFGGNVTLHQVIYGATRSPEPLSCREQLSLGKCLKYSLDVVNGLLFLHSQSILHLDLKPANILISEQDVCKISDFGCSQKLQDLRCRQASPHHIGGTYTHQAPEILKGEIATPKADIYSFGITLWQMTTREVPYSGEPQYVQYAVVAYNLRPSLAGAVFTASLTGKTLQNIIQSCWEARALQRPGAELLQRDLKAFRGALG</sequence>
<comment type="catalytic activity">
    <reaction>
        <text>L-seryl-[protein] + ATP = O-phospho-L-seryl-[protein] + ADP + H(+)</text>
        <dbReference type="Rhea" id="RHEA:17989"/>
        <dbReference type="Rhea" id="RHEA-COMP:9863"/>
        <dbReference type="Rhea" id="RHEA-COMP:11604"/>
        <dbReference type="ChEBI" id="CHEBI:15378"/>
        <dbReference type="ChEBI" id="CHEBI:29999"/>
        <dbReference type="ChEBI" id="CHEBI:30616"/>
        <dbReference type="ChEBI" id="CHEBI:83421"/>
        <dbReference type="ChEBI" id="CHEBI:456216"/>
        <dbReference type="EC" id="2.7.11.1"/>
    </reaction>
</comment>
<comment type="catalytic activity">
    <reaction>
        <text>L-threonyl-[protein] + ATP = O-phospho-L-threonyl-[protein] + ADP + H(+)</text>
        <dbReference type="Rhea" id="RHEA:46608"/>
        <dbReference type="Rhea" id="RHEA-COMP:11060"/>
        <dbReference type="Rhea" id="RHEA-COMP:11605"/>
        <dbReference type="ChEBI" id="CHEBI:15378"/>
        <dbReference type="ChEBI" id="CHEBI:30013"/>
        <dbReference type="ChEBI" id="CHEBI:30616"/>
        <dbReference type="ChEBI" id="CHEBI:61977"/>
        <dbReference type="ChEBI" id="CHEBI:456216"/>
        <dbReference type="EC" id="2.7.11.1"/>
    </reaction>
</comment>
<comment type="similarity">
    <text evidence="1">Belongs to the protein kinase superfamily. Ser/Thr protein kinase family.</text>
</comment>
<dbReference type="EC" id="2.7.11.1"/>
<dbReference type="EMBL" id="M11909">
    <property type="protein sequence ID" value="AAA46496.1"/>
    <property type="molecule type" value="mRNA"/>
</dbReference>
<dbReference type="PIR" id="A25318">
    <property type="entry name" value="TVMVHT"/>
</dbReference>
<dbReference type="SMR" id="P07331"/>
<dbReference type="BRENDA" id="2.7.10.2">
    <property type="organism ID" value="3394"/>
</dbReference>
<dbReference type="GO" id="GO:0005524">
    <property type="term" value="F:ATP binding"/>
    <property type="evidence" value="ECO:0007669"/>
    <property type="project" value="UniProtKB-KW"/>
</dbReference>
<dbReference type="GO" id="GO:0106310">
    <property type="term" value="F:protein serine kinase activity"/>
    <property type="evidence" value="ECO:0007669"/>
    <property type="project" value="RHEA"/>
</dbReference>
<dbReference type="GO" id="GO:0004674">
    <property type="term" value="F:protein serine/threonine kinase activity"/>
    <property type="evidence" value="ECO:0007669"/>
    <property type="project" value="UniProtKB-KW"/>
</dbReference>
<dbReference type="CDD" id="cd13979">
    <property type="entry name" value="STKc_Mos"/>
    <property type="match status" value="1"/>
</dbReference>
<dbReference type="FunFam" id="1.10.510.10:FF:000490">
    <property type="entry name" value="Proto-oncogene serine/threonine-protein kinase mos"/>
    <property type="match status" value="1"/>
</dbReference>
<dbReference type="FunFam" id="3.30.200.20:FF:000316">
    <property type="entry name" value="Proto-oncogene serine/threonine-protein kinase mos"/>
    <property type="match status" value="1"/>
</dbReference>
<dbReference type="Gene3D" id="3.30.200.20">
    <property type="entry name" value="Phosphorylase Kinase, domain 1"/>
    <property type="match status" value="1"/>
</dbReference>
<dbReference type="Gene3D" id="1.10.510.10">
    <property type="entry name" value="Transferase(Phosphotransferase) domain 1"/>
    <property type="match status" value="1"/>
</dbReference>
<dbReference type="InterPro" id="IPR011009">
    <property type="entry name" value="Kinase-like_dom_sf"/>
</dbReference>
<dbReference type="InterPro" id="IPR000719">
    <property type="entry name" value="Prot_kinase_dom"/>
</dbReference>
<dbReference type="InterPro" id="IPR017441">
    <property type="entry name" value="Protein_kinase_ATP_BS"/>
</dbReference>
<dbReference type="InterPro" id="IPR008271">
    <property type="entry name" value="Ser/Thr_kinase_AS"/>
</dbReference>
<dbReference type="InterPro" id="IPR051681">
    <property type="entry name" value="Ser/Thr_Kinases-Pseudokinases"/>
</dbReference>
<dbReference type="PANTHER" id="PTHR44329">
    <property type="entry name" value="SERINE/THREONINE-PROTEIN KINASE TNNI3K-RELATED"/>
    <property type="match status" value="1"/>
</dbReference>
<dbReference type="PANTHER" id="PTHR44329:SF285">
    <property type="entry name" value="V-MOS MOLONEY MURINE SARCOMA VIRAL ONCO HOMOLOG"/>
    <property type="match status" value="1"/>
</dbReference>
<dbReference type="Pfam" id="PF00069">
    <property type="entry name" value="Pkinase"/>
    <property type="match status" value="1"/>
</dbReference>
<dbReference type="SMART" id="SM00220">
    <property type="entry name" value="S_TKc"/>
    <property type="match status" value="1"/>
</dbReference>
<dbReference type="SUPFAM" id="SSF56112">
    <property type="entry name" value="Protein kinase-like (PK-like)"/>
    <property type="match status" value="1"/>
</dbReference>
<dbReference type="PROSITE" id="PS00107">
    <property type="entry name" value="PROTEIN_KINASE_ATP"/>
    <property type="match status" value="1"/>
</dbReference>
<dbReference type="PROSITE" id="PS50011">
    <property type="entry name" value="PROTEIN_KINASE_DOM"/>
    <property type="match status" value="1"/>
</dbReference>
<dbReference type="PROSITE" id="PS00108">
    <property type="entry name" value="PROTEIN_KINASE_ST"/>
    <property type="match status" value="1"/>
</dbReference>
<organism>
    <name type="scientific">Moloney murine sarcoma virus (strain HT-1)</name>
    <name type="common">MoMSV</name>
    <dbReference type="NCBI Taxonomy" id="11810"/>
    <lineage>
        <taxon>Viruses</taxon>
        <taxon>Riboviria</taxon>
        <taxon>Pararnavirae</taxon>
        <taxon>Artverviricota</taxon>
        <taxon>Revtraviricetes</taxon>
        <taxon>Ortervirales</taxon>
        <taxon>Retroviridae</taxon>
        <taxon>Orthoretrovirinae</taxon>
        <taxon>Gammaretrovirus</taxon>
        <taxon>Moloney murine sarcoma virus</taxon>
    </lineage>
</organism>
<keyword id="KW-0067">ATP-binding</keyword>
<keyword id="KW-0418">Kinase</keyword>
<keyword id="KW-0547">Nucleotide-binding</keyword>
<keyword id="KW-0553">Oncogene</keyword>
<keyword id="KW-0723">Serine/threonine-protein kinase</keyword>
<keyword id="KW-0808">Transferase</keyword>
<reference key="1">
    <citation type="journal article" date="1985" name="J. Virol.">
        <title>Nucleotide sequence and biochemical activities of the Moloney murine sarcoma virus strain HT-1 mos gene.</title>
        <authorList>
            <person name="Seth A."/>
            <person name="Vande Woude G.F."/>
        </authorList>
    </citation>
    <scope>NUCLEOTIDE SEQUENCE [MRNA]</scope>
</reference>
<feature type="chain" id="PRO_0000086359" description="Serine/threonine-protein kinase-transforming protein mos">
    <location>
        <begin position="1"/>
        <end position="374"/>
    </location>
</feature>
<feature type="domain" description="Protein kinase" evidence="1">
    <location>
        <begin position="94"/>
        <end position="370"/>
    </location>
</feature>
<feature type="active site" description="Proton acceptor" evidence="1 2">
    <location>
        <position position="229"/>
    </location>
</feature>
<feature type="binding site" evidence="1">
    <location>
        <begin position="100"/>
        <end position="108"/>
    </location>
    <ligand>
        <name>ATP</name>
        <dbReference type="ChEBI" id="CHEBI:30616"/>
    </ligand>
</feature>
<feature type="binding site" evidence="1">
    <location>
        <position position="121"/>
    </location>
    <ligand>
        <name>ATP</name>
        <dbReference type="ChEBI" id="CHEBI:30616"/>
    </ligand>
</feature>
<name>MOS_MSVMH</name>
<protein>
    <recommendedName>
        <fullName>Serine/threonine-protein kinase-transforming protein mos</fullName>
        <ecNumber>2.7.11.1</ecNumber>
    </recommendedName>
</protein>
<evidence type="ECO:0000255" key="1">
    <source>
        <dbReference type="PROSITE-ProRule" id="PRU00159"/>
    </source>
</evidence>
<evidence type="ECO:0000255" key="2">
    <source>
        <dbReference type="PROSITE-ProRule" id="PRU10027"/>
    </source>
</evidence>